<name>BLAC_BACCE</name>
<organism>
    <name type="scientific">Bacillus cereus</name>
    <dbReference type="NCBI Taxonomy" id="1396"/>
    <lineage>
        <taxon>Bacteria</taxon>
        <taxon>Bacillati</taxon>
        <taxon>Bacillota</taxon>
        <taxon>Bacilli</taxon>
        <taxon>Bacillales</taxon>
        <taxon>Bacillaceae</taxon>
        <taxon>Bacillus</taxon>
        <taxon>Bacillus cereus group</taxon>
    </lineage>
</organism>
<gene>
    <name type="primary">blaY</name>
</gene>
<protein>
    <recommendedName>
        <fullName>Beta-lactamase 1</fullName>
        <ecNumber>3.5.2.6</ecNumber>
    </recommendedName>
    <alternativeName>
        <fullName>Beta-lactamase I</fullName>
    </alternativeName>
    <alternativeName>
        <fullName>Penicillinase</fullName>
    </alternativeName>
</protein>
<feature type="signal peptide">
    <location>
        <begin position="1"/>
        <end position="27"/>
    </location>
</feature>
<feature type="chain" id="PRO_0000016970" description="Beta-lactamase 1">
    <location>
        <begin position="28"/>
        <end position="306"/>
    </location>
</feature>
<feature type="active site" description="Acyl-ester intermediate" evidence="2">
    <location>
        <position position="91"/>
    </location>
</feature>
<feature type="active site" description="Proton acceptor" evidence="1">
    <location>
        <position position="187"/>
    </location>
</feature>
<feature type="binding site" evidence="1">
    <location>
        <begin position="253"/>
        <end position="255"/>
    </location>
    <ligand>
        <name>substrate</name>
    </ligand>
</feature>
<feature type="sequence conflict" description="In Ref. 2; CAA29819." evidence="3" ref="2">
    <original>S</original>
    <variation>R</variation>
    <location>
        <position position="273"/>
    </location>
</feature>
<feature type="sequence conflict" description="In Ref. 2; CAA29819." evidence="3" ref="2">
    <original>VLI</original>
    <variation>IAIL</variation>
    <location>
        <begin position="278"/>
        <end position="280"/>
    </location>
</feature>
<feature type="sequence conflict" description="In Ref. 2; CAA29819." evidence="3" ref="2">
    <original>ND</original>
    <variation>DN</variation>
    <location>
        <begin position="291"/>
        <end position="292"/>
    </location>
</feature>
<feature type="sequence conflict" description="In Ref. 2; CAA29819." evidence="3" ref="2">
    <original>GS</original>
    <variation>ALR</variation>
    <location>
        <begin position="305"/>
        <end position="306"/>
    </location>
</feature>
<dbReference type="EC" id="3.5.2.6"/>
<dbReference type="EMBL" id="X01990">
    <property type="protein sequence ID" value="CAA26021.1"/>
    <property type="status" value="ALT_INIT"/>
    <property type="molecule type" value="Genomic_DNA"/>
</dbReference>
<dbReference type="EMBL" id="X01602">
    <property type="protein sequence ID" value="CAA25753.1"/>
    <property type="molecule type" value="Genomic_DNA"/>
</dbReference>
<dbReference type="EMBL" id="X06599">
    <property type="protein sequence ID" value="CAA29819.1"/>
    <property type="status" value="ALT_INIT"/>
    <property type="molecule type" value="Genomic_DNA"/>
</dbReference>
<dbReference type="PIR" id="A01004">
    <property type="entry name" value="PNBSU"/>
</dbReference>
<dbReference type="SMR" id="P00809"/>
<dbReference type="BindingDB" id="P00809"/>
<dbReference type="ChEMBL" id="CHEMBL5732"/>
<dbReference type="DrugCentral" id="P00809"/>
<dbReference type="SABIO-RK" id="P00809"/>
<dbReference type="GO" id="GO:0008800">
    <property type="term" value="F:beta-lactamase activity"/>
    <property type="evidence" value="ECO:0007669"/>
    <property type="project" value="UniProtKB-EC"/>
</dbReference>
<dbReference type="GO" id="GO:0030655">
    <property type="term" value="P:beta-lactam antibiotic catabolic process"/>
    <property type="evidence" value="ECO:0007669"/>
    <property type="project" value="InterPro"/>
</dbReference>
<dbReference type="GO" id="GO:0046677">
    <property type="term" value="P:response to antibiotic"/>
    <property type="evidence" value="ECO:0007669"/>
    <property type="project" value="UniProtKB-KW"/>
</dbReference>
<dbReference type="Gene3D" id="3.40.710.10">
    <property type="entry name" value="DD-peptidase/beta-lactamase superfamily"/>
    <property type="match status" value="1"/>
</dbReference>
<dbReference type="InterPro" id="IPR012338">
    <property type="entry name" value="Beta-lactam/transpept-like"/>
</dbReference>
<dbReference type="InterPro" id="IPR045155">
    <property type="entry name" value="Beta-lactam_cat"/>
</dbReference>
<dbReference type="InterPro" id="IPR000871">
    <property type="entry name" value="Beta-lactam_class-A"/>
</dbReference>
<dbReference type="InterPro" id="IPR023650">
    <property type="entry name" value="Beta-lactam_class-A_AS"/>
</dbReference>
<dbReference type="NCBIfam" id="NF033096">
    <property type="entry name" value="bla1"/>
    <property type="match status" value="1"/>
</dbReference>
<dbReference type="NCBIfam" id="NF033103">
    <property type="entry name" value="bla_class_A"/>
    <property type="match status" value="1"/>
</dbReference>
<dbReference type="NCBIfam" id="NF012167">
    <property type="entry name" value="classA_firm"/>
    <property type="match status" value="1"/>
</dbReference>
<dbReference type="PANTHER" id="PTHR35333">
    <property type="entry name" value="BETA-LACTAMASE"/>
    <property type="match status" value="1"/>
</dbReference>
<dbReference type="PANTHER" id="PTHR35333:SF3">
    <property type="entry name" value="BETA-LACTAMASE-TYPE TRANSPEPTIDASE FOLD CONTAINING PROTEIN"/>
    <property type="match status" value="1"/>
</dbReference>
<dbReference type="Pfam" id="PF13354">
    <property type="entry name" value="Beta-lactamase2"/>
    <property type="match status" value="1"/>
</dbReference>
<dbReference type="PRINTS" id="PR00118">
    <property type="entry name" value="BLACTAMASEA"/>
</dbReference>
<dbReference type="SUPFAM" id="SSF56601">
    <property type="entry name" value="beta-lactamase/transpeptidase-like"/>
    <property type="match status" value="1"/>
</dbReference>
<dbReference type="PROSITE" id="PS00146">
    <property type="entry name" value="BETA_LACTAMASE_A"/>
    <property type="match status" value="1"/>
</dbReference>
<proteinExistence type="inferred from homology"/>
<keyword id="KW-0046">Antibiotic resistance</keyword>
<keyword id="KW-0378">Hydrolase</keyword>
<keyword id="KW-0732">Signal</keyword>
<comment type="function">
    <text>This protein is a beta-lactamase with a substrate specificity for penicillins.</text>
</comment>
<comment type="catalytic activity">
    <reaction evidence="2">
        <text>a beta-lactam + H2O = a substituted beta-amino acid</text>
        <dbReference type="Rhea" id="RHEA:20401"/>
        <dbReference type="ChEBI" id="CHEBI:15377"/>
        <dbReference type="ChEBI" id="CHEBI:35627"/>
        <dbReference type="ChEBI" id="CHEBI:140347"/>
        <dbReference type="EC" id="3.5.2.6"/>
    </reaction>
</comment>
<comment type="miscellaneous">
    <text evidence="4">The class A beta-lactamase family has a specific amino-acid numbering system, sometimes called Ambler or ABL numbering and often misspelt as Amber. A multiple sequence alignment was used to derive a consensus sequence and then the consensus was numbered taking into account insertions and deletions. This allows use of identical numbers, e.g. for active site residues, despite differences in protein length. UniProt always uses natural numbering of residues, hence there appear to be differences in numbering between this entry and some papers.</text>
</comment>
<comment type="similarity">
    <text evidence="3">Belongs to the class-A beta-lactamase family.</text>
</comment>
<comment type="sequence caution" evidence="3">
    <conflict type="erroneous initiation">
        <sequence resource="EMBL-CDS" id="CAA26021"/>
    </conflict>
</comment>
<comment type="sequence caution" evidence="3">
    <conflict type="erroneous initiation">
        <sequence resource="EMBL-CDS" id="CAA29819"/>
    </conflict>
</comment>
<reference key="1">
    <citation type="journal article" date="1983" name="Nucleic Acids Res.">
        <title>Molecular cloning and nucleotide sequence of the type I beta-lactamase gene from Bacillus cereus.</title>
        <authorList>
            <person name="Sloma A."/>
            <person name="Gross M."/>
        </authorList>
    </citation>
    <scope>NUCLEOTIDE SEQUENCE [GENOMIC DNA]</scope>
    <source>
        <strain>569/H / NCTC 9945</strain>
    </source>
</reference>
<reference key="2">
    <citation type="journal article" date="1987" name="Biochem. J.">
        <title>Beta-lactamase I from Bacillus cereus. Structure and site-directed mutagenesis.</title>
        <authorList>
            <person name="Madgwick P.J."/>
            <person name="Waley S.G."/>
        </authorList>
    </citation>
    <scope>NUCLEOTIDE SEQUENCE [GENOMIC DNA]</scope>
    <source>
        <strain>569/H/9</strain>
    </source>
</reference>
<reference key="3">
    <citation type="journal article" date="1983" name="FEBS Lett.">
        <title>Bacillus cereus 569/H beta-lactamase I: cloning in Escherichia coli and signal sequence determination.</title>
        <authorList>
            <person name="Mezes P.S.F."/>
            <person name="Yang Y.Q."/>
            <person name="Hussain M."/>
            <person name="Lampen J.O."/>
        </authorList>
    </citation>
    <scope>NUCLEOTIDE SEQUENCE [GENOMIC DNA] OF 3-75</scope>
    <source>
        <strain>569/H / NCTC 9945</strain>
    </source>
</reference>
<reference key="4">
    <citation type="journal article" date="1991" name="Biochem. J.">
        <title>A standard numbering scheme for the class A beta-lactamases.</title>
        <authorList>
            <person name="Ambler R.P."/>
            <person name="Coulson A.F."/>
            <person name="Frere J.M."/>
            <person name="Ghuysen J.M."/>
            <person name="Joris B."/>
            <person name="Forsman M."/>
            <person name="Levesque R.C."/>
            <person name="Tiraby G."/>
            <person name="Waley S.G."/>
        </authorList>
    </citation>
    <scope>AMINO ACID NUMBERING SCHEME</scope>
</reference>
<sequence length="306" mass="33322">MILKNKRMLKIGICVGILGLSITSLEAFTGESLQVEAKEKTGQVKHKNQATHKEFSQLEKKFDARLGVYAIDTGTNQTISYRPNERFAFASTYKALAAGVLLQQNSIDSLNEVITYTKEDLVDYSPVTEKHVDTGMKLGEIAEAAVRSSDNTAGNILFNKIGGPKGYEKALRHMGDRITMSNRFETELNEAIPGDIRDTSTAKAIATNLKAFTVGNALPAEKRKILTEWMKGNATGDKLIRAGIPTDWVVGDKSGAGSYGTRNDIAVVWPPNSAPIIVLISSKDEKEAIYNDQLIAEATKVIVKGS</sequence>
<evidence type="ECO:0000250" key="1"/>
<evidence type="ECO:0000255" key="2">
    <source>
        <dbReference type="PROSITE-ProRule" id="PRU10101"/>
    </source>
</evidence>
<evidence type="ECO:0000305" key="3"/>
<evidence type="ECO:0000305" key="4">
    <source>
    </source>
</evidence>
<accession>P00809</accession>
<accession>P70876</accession>